<feature type="chain" id="PRO_0000193534" description="Cytochrome b-c1 complex subunit 7">
    <location>
        <begin position="1"/>
        <end position="127"/>
    </location>
</feature>
<comment type="function">
    <text evidence="1">Component of the ubiquinol-cytochrome c oxidoreductase, a multisubunit transmembrane complex that is part of the mitochondrial electron transport chain which drives oxidative phosphorylation. The respiratory chain contains 3 multisubunit complexes succinate dehydrogenase (complex II, CII), ubiquinol-cytochrome c oxidoreductase (cytochrome b-c1 complex, complex III, CIII) and cytochrome c oxidase (complex IV, CIV), that cooperate to transfer electrons derived from NADH and succinate to molecular oxygen, creating an electrochemical gradient over the inner membrane that drives transmembrane transport and the ATP synthase. The cytochrome b-c1 complex catalyzes electron transfer from ubiquinol to cytochrome c, linking this redox reaction to translocation of protons across the mitochondrial inner membrane, with protons being carried across the membrane as hydrogens on the quinol. In the process called Q cycle, 2 protons are consumed from the matrix, 4 protons are released into the intermembrane space and 2 electrons are passed to cytochrome c.</text>
</comment>
<comment type="subunit">
    <text evidence="1">Component of the ubiquinol-cytochrome c oxidoreductase (cytochrome b-c1 complex, complex III, CIII), a multisubunit enzyme composed of 3 respiratory subunits cytochrome b, cytochrome c1 and Rieske protein, 2 core protein subunits, and additional low-molecular weight protein subunits. The complex exists as an obligatory dimer and forms supercomplexes (SCs) in the inner mitochondrial membrane with cytochrome c oxidase (complex IV, CIV).</text>
</comment>
<comment type="subcellular location">
    <subcellularLocation>
        <location evidence="1">Mitochondrion inner membrane</location>
        <topology evidence="1">Peripheral membrane protein</topology>
        <orientation evidence="1">Matrix side</orientation>
    </subcellularLocation>
</comment>
<comment type="similarity">
    <text evidence="2">Belongs to the UQCRB/QCR7 family.</text>
</comment>
<name>QCR7_KLULA</name>
<keyword id="KW-0249">Electron transport</keyword>
<keyword id="KW-0472">Membrane</keyword>
<keyword id="KW-0496">Mitochondrion</keyword>
<keyword id="KW-0999">Mitochondrion inner membrane</keyword>
<keyword id="KW-1185">Reference proteome</keyword>
<keyword id="KW-0679">Respiratory chain</keyword>
<keyword id="KW-0813">Transport</keyword>
<accession>P49345</accession>
<sequence length="127" mass="14663">MPQTFTSIAKIGDYILRTPALAKVVVPIAHQFINLSGYRKMGLRFDDLIEEENELAQTALRRLPADESYARIYRIINAHQLSLSHHLLPKDKWTKPEDDIPYLTPYLLEAEAFVKEKEELDNLEVAK</sequence>
<proteinExistence type="inferred from homology"/>
<reference key="1">
    <citation type="journal article" date="1994" name="Biochim. Biophys. Acta">
        <title>Isolation and characterisation of the linked genes APA2 and QCR7, coding for Ap4A phosphorylase II and the 14 kDa subunit VII of the mitochondrial bc1-complex in the yeast Kluyveromyces lactis.</title>
        <authorList>
            <person name="Mulder W."/>
            <person name="Scholten I.H.J.M."/>
            <person name="van Roon H."/>
            <person name="Grivell L.A."/>
        </authorList>
    </citation>
    <scope>NUCLEOTIDE SEQUENCE [GENOMIC DNA]</scope>
    <source>
        <strain>ATCC 8585 / CBS 2359 / DSM 70799 / NBRC 1267 / NRRL Y-1140 / WM37</strain>
    </source>
</reference>
<reference key="2">
    <citation type="journal article" date="2004" name="Nature">
        <title>Genome evolution in yeasts.</title>
        <authorList>
            <person name="Dujon B."/>
            <person name="Sherman D."/>
            <person name="Fischer G."/>
            <person name="Durrens P."/>
            <person name="Casaregola S."/>
            <person name="Lafontaine I."/>
            <person name="de Montigny J."/>
            <person name="Marck C."/>
            <person name="Neuveglise C."/>
            <person name="Talla E."/>
            <person name="Goffard N."/>
            <person name="Frangeul L."/>
            <person name="Aigle M."/>
            <person name="Anthouard V."/>
            <person name="Babour A."/>
            <person name="Barbe V."/>
            <person name="Barnay S."/>
            <person name="Blanchin S."/>
            <person name="Beckerich J.-M."/>
            <person name="Beyne E."/>
            <person name="Bleykasten C."/>
            <person name="Boisrame A."/>
            <person name="Boyer J."/>
            <person name="Cattolico L."/>
            <person name="Confanioleri F."/>
            <person name="de Daruvar A."/>
            <person name="Despons L."/>
            <person name="Fabre E."/>
            <person name="Fairhead C."/>
            <person name="Ferry-Dumazet H."/>
            <person name="Groppi A."/>
            <person name="Hantraye F."/>
            <person name="Hennequin C."/>
            <person name="Jauniaux N."/>
            <person name="Joyet P."/>
            <person name="Kachouri R."/>
            <person name="Kerrest A."/>
            <person name="Koszul R."/>
            <person name="Lemaire M."/>
            <person name="Lesur I."/>
            <person name="Ma L."/>
            <person name="Muller H."/>
            <person name="Nicaud J.-M."/>
            <person name="Nikolski M."/>
            <person name="Oztas S."/>
            <person name="Ozier-Kalogeropoulos O."/>
            <person name="Pellenz S."/>
            <person name="Potier S."/>
            <person name="Richard G.-F."/>
            <person name="Straub M.-L."/>
            <person name="Suleau A."/>
            <person name="Swennen D."/>
            <person name="Tekaia F."/>
            <person name="Wesolowski-Louvel M."/>
            <person name="Westhof E."/>
            <person name="Wirth B."/>
            <person name="Zeniou-Meyer M."/>
            <person name="Zivanovic Y."/>
            <person name="Bolotin-Fukuhara M."/>
            <person name="Thierry A."/>
            <person name="Bouchier C."/>
            <person name="Caudron B."/>
            <person name="Scarpelli C."/>
            <person name="Gaillardin C."/>
            <person name="Weissenbach J."/>
            <person name="Wincker P."/>
            <person name="Souciet J.-L."/>
        </authorList>
    </citation>
    <scope>NUCLEOTIDE SEQUENCE [LARGE SCALE GENOMIC DNA]</scope>
    <source>
        <strain>ATCC 8585 / CBS 2359 / DSM 70799 / NBRC 1267 / NRRL Y-1140 / WM37</strain>
    </source>
</reference>
<dbReference type="EMBL" id="X76027">
    <property type="protein sequence ID" value="CAA53617.1"/>
    <property type="molecule type" value="Genomic_DNA"/>
</dbReference>
<dbReference type="EMBL" id="CR382123">
    <property type="protein sequence ID" value="CAH01082.1"/>
    <property type="molecule type" value="Genomic_DNA"/>
</dbReference>
<dbReference type="PIR" id="S50213">
    <property type="entry name" value="S50213"/>
</dbReference>
<dbReference type="RefSeq" id="XP_452231.1">
    <property type="nucleotide sequence ID" value="XM_452231.1"/>
</dbReference>
<dbReference type="SMR" id="P49345"/>
<dbReference type="FunCoup" id="P49345">
    <property type="interactions" value="232"/>
</dbReference>
<dbReference type="STRING" id="284590.P49345"/>
<dbReference type="PaxDb" id="284590-P49345"/>
<dbReference type="KEGG" id="kla:KLLA0_C00825g"/>
<dbReference type="eggNOG" id="KOG3440">
    <property type="taxonomic scope" value="Eukaryota"/>
</dbReference>
<dbReference type="HOGENOM" id="CLU_115154_1_0_1"/>
<dbReference type="InParanoid" id="P49345"/>
<dbReference type="OMA" id="MAKWEAN"/>
<dbReference type="Proteomes" id="UP000000598">
    <property type="component" value="Chromosome C"/>
</dbReference>
<dbReference type="GO" id="GO:0005743">
    <property type="term" value="C:mitochondrial inner membrane"/>
    <property type="evidence" value="ECO:0007669"/>
    <property type="project" value="UniProtKB-SubCell"/>
</dbReference>
<dbReference type="GO" id="GO:0045275">
    <property type="term" value="C:respiratory chain complex III"/>
    <property type="evidence" value="ECO:0007669"/>
    <property type="project" value="InterPro"/>
</dbReference>
<dbReference type="GO" id="GO:0006122">
    <property type="term" value="P:mitochondrial electron transport, ubiquinol to cytochrome c"/>
    <property type="evidence" value="ECO:0007669"/>
    <property type="project" value="InterPro"/>
</dbReference>
<dbReference type="FunFam" id="1.10.1090.10:FF:000001">
    <property type="entry name" value="Cytochrome b-c1 complex subunit 7"/>
    <property type="match status" value="1"/>
</dbReference>
<dbReference type="Gene3D" id="1.10.1090.10">
    <property type="entry name" value="Cytochrome b-c1 complex subunit 7"/>
    <property type="match status" value="1"/>
</dbReference>
<dbReference type="InterPro" id="IPR003197">
    <property type="entry name" value="QCR7"/>
</dbReference>
<dbReference type="InterPro" id="IPR036544">
    <property type="entry name" value="QCR7_sf"/>
</dbReference>
<dbReference type="PANTHER" id="PTHR12022:SF0">
    <property type="entry name" value="CYTOCHROME B-C1 COMPLEX SUBUNIT 7"/>
    <property type="match status" value="1"/>
</dbReference>
<dbReference type="PANTHER" id="PTHR12022">
    <property type="entry name" value="UBIQUINOL-CYTOCHROME C REDUCTASE COMPLEX 14 KD PROTEIN"/>
    <property type="match status" value="1"/>
</dbReference>
<dbReference type="Pfam" id="PF02271">
    <property type="entry name" value="UCR_14kD"/>
    <property type="match status" value="1"/>
</dbReference>
<dbReference type="PIRSF" id="PIRSF000022">
    <property type="entry name" value="Bc1_14K"/>
    <property type="match status" value="1"/>
</dbReference>
<dbReference type="SUPFAM" id="SSF81524">
    <property type="entry name" value="14 kDa protein of cytochrome bc1 complex (Ubiquinol-cytochrome c reductase)"/>
    <property type="match status" value="1"/>
</dbReference>
<gene>
    <name type="primary">QCR7</name>
    <name type="ordered locus">KLLA0C00825g</name>
</gene>
<protein>
    <recommendedName>
        <fullName>Cytochrome b-c1 complex subunit 7</fullName>
    </recommendedName>
    <alternativeName>
        <fullName>Complex III subunit 7</fullName>
    </alternativeName>
    <alternativeName>
        <fullName>Complex III subunit VII</fullName>
    </alternativeName>
    <alternativeName>
        <fullName>Ubiquinol-cytochrome c reductase complex 14 kDa protein</fullName>
    </alternativeName>
</protein>
<organism>
    <name type="scientific">Kluyveromyces lactis (strain ATCC 8585 / CBS 2359 / DSM 70799 / NBRC 1267 / NRRL Y-1140 / WM37)</name>
    <name type="common">Yeast</name>
    <name type="synonym">Candida sphaerica</name>
    <dbReference type="NCBI Taxonomy" id="284590"/>
    <lineage>
        <taxon>Eukaryota</taxon>
        <taxon>Fungi</taxon>
        <taxon>Dikarya</taxon>
        <taxon>Ascomycota</taxon>
        <taxon>Saccharomycotina</taxon>
        <taxon>Saccharomycetes</taxon>
        <taxon>Saccharomycetales</taxon>
        <taxon>Saccharomycetaceae</taxon>
        <taxon>Kluyveromyces</taxon>
    </lineage>
</organism>
<evidence type="ECO:0000250" key="1">
    <source>
        <dbReference type="UniProtKB" id="P00128"/>
    </source>
</evidence>
<evidence type="ECO:0000305" key="2"/>